<name>YKGH_ECOLI</name>
<sequence>MREQIKQDIDLIEILFYLKKKIRVILFIMAICMAMVLLFLYINKDNIKVIYSLKINQTTPGILVSCDSNNNFACQTTMTEDVIQRITTFFHTSPDVKNREIRLEWSGDKRALPTAEEEISRVQASIIKWYASEYHNGRQVLDEIQTPSAINSELYTKMIYLTRNWSLYPNGDGCVTISSPEIKNKYPAAICLALGFFLSIVISVMFCLVKKMVDEYQQNSGQ</sequence>
<proteinExistence type="predicted"/>
<dbReference type="EMBL" id="U73857">
    <property type="protein sequence ID" value="AAB18036.1"/>
    <property type="molecule type" value="Genomic_DNA"/>
</dbReference>
<dbReference type="EMBL" id="U00096">
    <property type="protein sequence ID" value="AAC73413.1"/>
    <property type="molecule type" value="Genomic_DNA"/>
</dbReference>
<dbReference type="EMBL" id="AP009048">
    <property type="protein sequence ID" value="BAE76093.1"/>
    <property type="molecule type" value="Genomic_DNA"/>
</dbReference>
<dbReference type="PIR" id="F64757">
    <property type="entry name" value="F64757"/>
</dbReference>
<dbReference type="RefSeq" id="NP_414844.1">
    <property type="nucleotide sequence ID" value="NC_000913.3"/>
</dbReference>
<dbReference type="RefSeq" id="WP_001209100.1">
    <property type="nucleotide sequence ID" value="NZ_STEB01000020.1"/>
</dbReference>
<dbReference type="SMR" id="P77180"/>
<dbReference type="BioGRID" id="4261528">
    <property type="interactions" value="9"/>
</dbReference>
<dbReference type="FunCoup" id="P77180">
    <property type="interactions" value="12"/>
</dbReference>
<dbReference type="STRING" id="511145.b0310"/>
<dbReference type="PaxDb" id="511145-b0310"/>
<dbReference type="EnsemblBacteria" id="AAC73413">
    <property type="protein sequence ID" value="AAC73413"/>
    <property type="gene ID" value="b0310"/>
</dbReference>
<dbReference type="GeneID" id="947513"/>
<dbReference type="KEGG" id="ecj:JW0302"/>
<dbReference type="KEGG" id="eco:b0310"/>
<dbReference type="KEGG" id="ecoc:C3026_01515"/>
<dbReference type="KEGG" id="ecoc:C3026_24690"/>
<dbReference type="PATRIC" id="fig|511145.12.peg.317"/>
<dbReference type="EchoBASE" id="EB3355"/>
<dbReference type="eggNOG" id="ENOG5033T67">
    <property type="taxonomic scope" value="Bacteria"/>
</dbReference>
<dbReference type="HOGENOM" id="CLU_115780_0_0_6"/>
<dbReference type="InParanoid" id="P77180"/>
<dbReference type="OMA" id="FAWLWDF"/>
<dbReference type="BioCyc" id="EcoCyc:G6180-MONOMER"/>
<dbReference type="PRO" id="PR:P77180"/>
<dbReference type="Proteomes" id="UP000000625">
    <property type="component" value="Chromosome"/>
</dbReference>
<dbReference type="GO" id="GO:0005886">
    <property type="term" value="C:plasma membrane"/>
    <property type="evidence" value="ECO:0000314"/>
    <property type="project" value="EcoCyc"/>
</dbReference>
<evidence type="ECO:0000255" key="1"/>
<evidence type="ECO:0000305" key="2"/>
<gene>
    <name type="primary">ykgH</name>
    <name type="ordered locus">b0310</name>
    <name type="ordered locus">JW0302</name>
</gene>
<accession>P77180</accession>
<accession>Q2MCB3</accession>
<comment type="subcellular location">
    <subcellularLocation>
        <location evidence="2">Cell membrane</location>
        <topology evidence="2">Multi-pass membrane protein</topology>
    </subcellularLocation>
</comment>
<keyword id="KW-1003">Cell membrane</keyword>
<keyword id="KW-0472">Membrane</keyword>
<keyword id="KW-1185">Reference proteome</keyword>
<keyword id="KW-0812">Transmembrane</keyword>
<keyword id="KW-1133">Transmembrane helix</keyword>
<protein>
    <recommendedName>
        <fullName>Uncharacterized protein YkgH</fullName>
    </recommendedName>
</protein>
<reference key="1">
    <citation type="submission" date="1997-01" db="EMBL/GenBank/DDBJ databases">
        <title>Sequence of minutes 4-25 of Escherichia coli.</title>
        <authorList>
            <person name="Chung E."/>
            <person name="Allen E."/>
            <person name="Araujo R."/>
            <person name="Aparicio A.M."/>
            <person name="Davis K."/>
            <person name="Duncan M."/>
            <person name="Federspiel N."/>
            <person name="Hyman R."/>
            <person name="Kalman S."/>
            <person name="Komp C."/>
            <person name="Kurdi O."/>
            <person name="Lew H."/>
            <person name="Lin D."/>
            <person name="Namath A."/>
            <person name="Oefner P."/>
            <person name="Roberts D."/>
            <person name="Schramm S."/>
            <person name="Davis R.W."/>
        </authorList>
    </citation>
    <scope>NUCLEOTIDE SEQUENCE [LARGE SCALE GENOMIC DNA]</scope>
    <source>
        <strain>K12 / MG1655 / ATCC 47076</strain>
    </source>
</reference>
<reference key="2">
    <citation type="journal article" date="1997" name="Science">
        <title>The complete genome sequence of Escherichia coli K-12.</title>
        <authorList>
            <person name="Blattner F.R."/>
            <person name="Plunkett G. III"/>
            <person name="Bloch C.A."/>
            <person name="Perna N.T."/>
            <person name="Burland V."/>
            <person name="Riley M."/>
            <person name="Collado-Vides J."/>
            <person name="Glasner J.D."/>
            <person name="Rode C.K."/>
            <person name="Mayhew G.F."/>
            <person name="Gregor J."/>
            <person name="Davis N.W."/>
            <person name="Kirkpatrick H.A."/>
            <person name="Goeden M.A."/>
            <person name="Rose D.J."/>
            <person name="Mau B."/>
            <person name="Shao Y."/>
        </authorList>
    </citation>
    <scope>NUCLEOTIDE SEQUENCE [LARGE SCALE GENOMIC DNA]</scope>
    <source>
        <strain>K12 / MG1655 / ATCC 47076</strain>
    </source>
</reference>
<reference key="3">
    <citation type="journal article" date="2006" name="Mol. Syst. Biol.">
        <title>Highly accurate genome sequences of Escherichia coli K-12 strains MG1655 and W3110.</title>
        <authorList>
            <person name="Hayashi K."/>
            <person name="Morooka N."/>
            <person name="Yamamoto Y."/>
            <person name="Fujita K."/>
            <person name="Isono K."/>
            <person name="Choi S."/>
            <person name="Ohtsubo E."/>
            <person name="Baba T."/>
            <person name="Wanner B.L."/>
            <person name="Mori H."/>
            <person name="Horiuchi T."/>
        </authorList>
    </citation>
    <scope>NUCLEOTIDE SEQUENCE [LARGE SCALE GENOMIC DNA]</scope>
    <source>
        <strain>K12 / W3110 / ATCC 27325 / DSM 5911</strain>
    </source>
</reference>
<feature type="chain" id="PRO_0000168571" description="Uncharacterized protein YkgH">
    <location>
        <begin position="1"/>
        <end position="222"/>
    </location>
</feature>
<feature type="transmembrane region" description="Helical" evidence="1">
    <location>
        <begin position="22"/>
        <end position="42"/>
    </location>
</feature>
<feature type="transmembrane region" description="Helical" evidence="1">
    <location>
        <begin position="189"/>
        <end position="209"/>
    </location>
</feature>
<organism>
    <name type="scientific">Escherichia coli (strain K12)</name>
    <dbReference type="NCBI Taxonomy" id="83333"/>
    <lineage>
        <taxon>Bacteria</taxon>
        <taxon>Pseudomonadati</taxon>
        <taxon>Pseudomonadota</taxon>
        <taxon>Gammaproteobacteria</taxon>
        <taxon>Enterobacterales</taxon>
        <taxon>Enterobacteriaceae</taxon>
        <taxon>Escherichia</taxon>
    </lineage>
</organism>